<comment type="similarity">
    <text evidence="1">Belongs to the UPF0102 family.</text>
</comment>
<comment type="sequence caution" evidence="2">
    <conflict type="erroneous initiation">
        <sequence resource="EMBL-CDS" id="CAE50040"/>
    </conflict>
</comment>
<dbReference type="EMBL" id="BX248358">
    <property type="protein sequence ID" value="CAE50040.1"/>
    <property type="status" value="ALT_INIT"/>
    <property type="molecule type" value="Genomic_DNA"/>
</dbReference>
<dbReference type="RefSeq" id="WP_010935118.1">
    <property type="nucleotide sequence ID" value="NC_002935.2"/>
</dbReference>
<dbReference type="SMR" id="Q6NGK0"/>
<dbReference type="STRING" id="257309.DIP1513"/>
<dbReference type="DNASU" id="2650397"/>
<dbReference type="KEGG" id="cdi:DIP1513"/>
<dbReference type="HOGENOM" id="CLU_115353_2_2_11"/>
<dbReference type="Proteomes" id="UP000002198">
    <property type="component" value="Chromosome"/>
</dbReference>
<dbReference type="GO" id="GO:0003676">
    <property type="term" value="F:nucleic acid binding"/>
    <property type="evidence" value="ECO:0007669"/>
    <property type="project" value="InterPro"/>
</dbReference>
<dbReference type="CDD" id="cd20736">
    <property type="entry name" value="PoNe_Nuclease"/>
    <property type="match status" value="1"/>
</dbReference>
<dbReference type="Gene3D" id="3.40.1350.10">
    <property type="match status" value="1"/>
</dbReference>
<dbReference type="HAMAP" id="MF_00048">
    <property type="entry name" value="UPF0102"/>
    <property type="match status" value="1"/>
</dbReference>
<dbReference type="InterPro" id="IPR011335">
    <property type="entry name" value="Restrct_endonuc-II-like"/>
</dbReference>
<dbReference type="InterPro" id="IPR011856">
    <property type="entry name" value="tRNA_endonuc-like_dom_sf"/>
</dbReference>
<dbReference type="InterPro" id="IPR003509">
    <property type="entry name" value="UPF0102_YraN-like"/>
</dbReference>
<dbReference type="NCBIfam" id="NF009154">
    <property type="entry name" value="PRK12497.3-3"/>
    <property type="match status" value="1"/>
</dbReference>
<dbReference type="PANTHER" id="PTHR34039">
    <property type="entry name" value="UPF0102 PROTEIN YRAN"/>
    <property type="match status" value="1"/>
</dbReference>
<dbReference type="PANTHER" id="PTHR34039:SF1">
    <property type="entry name" value="UPF0102 PROTEIN YRAN"/>
    <property type="match status" value="1"/>
</dbReference>
<dbReference type="Pfam" id="PF02021">
    <property type="entry name" value="UPF0102"/>
    <property type="match status" value="1"/>
</dbReference>
<dbReference type="SUPFAM" id="SSF52980">
    <property type="entry name" value="Restriction endonuclease-like"/>
    <property type="match status" value="1"/>
</dbReference>
<gene>
    <name type="ordered locus">DIP1513</name>
</gene>
<evidence type="ECO:0000255" key="1">
    <source>
        <dbReference type="HAMAP-Rule" id="MF_00048"/>
    </source>
</evidence>
<evidence type="ECO:0000305" key="2"/>
<sequence>MTATHNHYLAVLGEDFVAQQYANEGYDITARNVSFSVGEIDIIATSPQGEVVFIEVKTRSSSLMDAAEAVTPTKMRKIHRAASKWLQGKPFADIRFDVVAVHVDEYGELDMTRYQGVEHGAC</sequence>
<name>Y1513_CORDI</name>
<reference key="1">
    <citation type="journal article" date="2003" name="Nucleic Acids Res.">
        <title>The complete genome sequence and analysis of Corynebacterium diphtheriae NCTC13129.</title>
        <authorList>
            <person name="Cerdeno-Tarraga A.-M."/>
            <person name="Efstratiou A."/>
            <person name="Dover L.G."/>
            <person name="Holden M.T.G."/>
            <person name="Pallen M.J."/>
            <person name="Bentley S.D."/>
            <person name="Besra G.S."/>
            <person name="Churcher C.M."/>
            <person name="James K.D."/>
            <person name="De Zoysa A."/>
            <person name="Chillingworth T."/>
            <person name="Cronin A."/>
            <person name="Dowd L."/>
            <person name="Feltwell T."/>
            <person name="Hamlin N."/>
            <person name="Holroyd S."/>
            <person name="Jagels K."/>
            <person name="Moule S."/>
            <person name="Quail M.A."/>
            <person name="Rabbinowitsch E."/>
            <person name="Rutherford K.M."/>
            <person name="Thomson N.R."/>
            <person name="Unwin L."/>
            <person name="Whitehead S."/>
            <person name="Barrell B.G."/>
            <person name="Parkhill J."/>
        </authorList>
    </citation>
    <scope>NUCLEOTIDE SEQUENCE [LARGE SCALE GENOMIC DNA]</scope>
    <source>
        <strain>ATCC 700971 / NCTC 13129 / Biotype gravis</strain>
    </source>
</reference>
<proteinExistence type="inferred from homology"/>
<organism>
    <name type="scientific">Corynebacterium diphtheriae (strain ATCC 700971 / NCTC 13129 / Biotype gravis)</name>
    <dbReference type="NCBI Taxonomy" id="257309"/>
    <lineage>
        <taxon>Bacteria</taxon>
        <taxon>Bacillati</taxon>
        <taxon>Actinomycetota</taxon>
        <taxon>Actinomycetes</taxon>
        <taxon>Mycobacteriales</taxon>
        <taxon>Corynebacteriaceae</taxon>
        <taxon>Corynebacterium</taxon>
    </lineage>
</organism>
<accession>Q6NGK0</accession>
<keyword id="KW-1185">Reference proteome</keyword>
<feature type="chain" id="PRO_0000336163" description="UPF0102 protein DIP1513">
    <location>
        <begin position="1"/>
        <end position="122"/>
    </location>
</feature>
<protein>
    <recommendedName>
        <fullName evidence="1">UPF0102 protein DIP1513</fullName>
    </recommendedName>
</protein>